<organism>
    <name type="scientific">Scheffersomyces stipitis (strain ATCC 58785 / CBS 6054 / NBRC 10063 / NRRL Y-11545)</name>
    <name type="common">Yeast</name>
    <name type="synonym">Pichia stipitis</name>
    <dbReference type="NCBI Taxonomy" id="322104"/>
    <lineage>
        <taxon>Eukaryota</taxon>
        <taxon>Fungi</taxon>
        <taxon>Dikarya</taxon>
        <taxon>Ascomycota</taxon>
        <taxon>Saccharomycotina</taxon>
        <taxon>Pichiomycetes</taxon>
        <taxon>Debaryomycetaceae</taxon>
        <taxon>Scheffersomyces</taxon>
    </lineage>
</organism>
<gene>
    <name type="primary">ARDH</name>
    <name type="synonym">ARD2</name>
    <name type="ORF">PICST_65696</name>
</gene>
<evidence type="ECO:0000250" key="1">
    <source>
        <dbReference type="UniProtKB" id="L0E2Z4"/>
    </source>
</evidence>
<evidence type="ECO:0000250" key="2">
    <source>
        <dbReference type="UniProtKB" id="O93868"/>
    </source>
</evidence>
<evidence type="ECO:0000255" key="3">
    <source>
        <dbReference type="PROSITE-ProRule" id="PRU10001"/>
    </source>
</evidence>
<evidence type="ECO:0000305" key="4"/>
<sequence length="278" mass="30003">MDYSYANVVPNFRLDGRLAIITGGSGGLAAVISRALLAQGADVALIDMNLERTKSAAKEVLGWGEETLKGEHASAIGQVSAWSCNIGDAEAVDATFSSINEHHGKIADLLINTAGYCENFPAETYPATNAESIMKVNGLGSFYVSQSFARPLIQNNLRGSIILIGSMSGTIVNDPQPQCMYNMSKAGVIHLVRSLACEWAKYNIRVNTLSPGYILTPLTRNVISGHTEMKEAWESKIPMKRMAEPKEFVGSILYLASETASSYTTGHNLVVDGGYECW</sequence>
<name>ARDH_PICST</name>
<keyword id="KW-0521">NADP</keyword>
<keyword id="KW-0560">Oxidoreductase</keyword>
<keyword id="KW-1185">Reference proteome</keyword>
<proteinExistence type="evidence at transcript level"/>
<dbReference type="EC" id="1.1.1.250"/>
<dbReference type="EMBL" id="Z46866">
    <property type="protein sequence ID" value="CAA86939.1"/>
    <property type="molecule type" value="mRNA"/>
</dbReference>
<dbReference type="EMBL" id="CP000499">
    <property type="protein sequence ID" value="ABN67006.1"/>
    <property type="molecule type" value="Genomic_DNA"/>
</dbReference>
<dbReference type="PIR" id="S57351">
    <property type="entry name" value="S57351"/>
</dbReference>
<dbReference type="RefSeq" id="XP_001385035.1">
    <property type="nucleotide sequence ID" value="XM_001384998.1"/>
</dbReference>
<dbReference type="SMR" id="P50167"/>
<dbReference type="STRING" id="322104.P50167"/>
<dbReference type="GeneID" id="4839199"/>
<dbReference type="KEGG" id="pic:PICST_65696"/>
<dbReference type="eggNOG" id="KOG0725">
    <property type="taxonomic scope" value="Eukaryota"/>
</dbReference>
<dbReference type="HOGENOM" id="CLU_010194_1_1_1"/>
<dbReference type="InParanoid" id="P50167"/>
<dbReference type="OMA" id="GYRICIN"/>
<dbReference type="OrthoDB" id="5325318at2759"/>
<dbReference type="BioCyc" id="MetaCyc:MONOMER-21870"/>
<dbReference type="UniPathway" id="UPA00380"/>
<dbReference type="Proteomes" id="UP000002258">
    <property type="component" value="Chromosome 5"/>
</dbReference>
<dbReference type="GO" id="GO:0047038">
    <property type="term" value="F:D-arabinitol 2-dehydrogenase activity"/>
    <property type="evidence" value="ECO:0000250"/>
    <property type="project" value="UniProtKB"/>
</dbReference>
<dbReference type="GO" id="GO:0051161">
    <property type="term" value="P:arabitol metabolic process"/>
    <property type="evidence" value="ECO:0007669"/>
    <property type="project" value="UniProtKB-UniPathway"/>
</dbReference>
<dbReference type="GO" id="GO:0005975">
    <property type="term" value="P:carbohydrate metabolic process"/>
    <property type="evidence" value="ECO:0000250"/>
    <property type="project" value="UniProtKB"/>
</dbReference>
<dbReference type="CDD" id="cd05352">
    <property type="entry name" value="MDH-like_SDR_c"/>
    <property type="match status" value="1"/>
</dbReference>
<dbReference type="FunFam" id="3.40.50.720:FF:000240">
    <property type="entry name" value="SDR family oxidoreductase"/>
    <property type="match status" value="1"/>
</dbReference>
<dbReference type="Gene3D" id="3.40.50.720">
    <property type="entry name" value="NAD(P)-binding Rossmann-like Domain"/>
    <property type="match status" value="1"/>
</dbReference>
<dbReference type="InterPro" id="IPR036291">
    <property type="entry name" value="NAD(P)-bd_dom_sf"/>
</dbReference>
<dbReference type="InterPro" id="IPR020904">
    <property type="entry name" value="Sc_DH/Rdtase_CS"/>
</dbReference>
<dbReference type="InterPro" id="IPR002347">
    <property type="entry name" value="SDR_fam"/>
</dbReference>
<dbReference type="PANTHER" id="PTHR42760:SF115">
    <property type="entry name" value="3-OXOACYL-[ACYL-CARRIER-PROTEIN] REDUCTASE FABG"/>
    <property type="match status" value="1"/>
</dbReference>
<dbReference type="PANTHER" id="PTHR42760">
    <property type="entry name" value="SHORT-CHAIN DEHYDROGENASES/REDUCTASES FAMILY MEMBER"/>
    <property type="match status" value="1"/>
</dbReference>
<dbReference type="Pfam" id="PF13561">
    <property type="entry name" value="adh_short_C2"/>
    <property type="match status" value="1"/>
</dbReference>
<dbReference type="PRINTS" id="PR00081">
    <property type="entry name" value="GDHRDH"/>
</dbReference>
<dbReference type="PRINTS" id="PR00080">
    <property type="entry name" value="SDRFAMILY"/>
</dbReference>
<dbReference type="SUPFAM" id="SSF51735">
    <property type="entry name" value="NAD(P)-binding Rossmann-fold domains"/>
    <property type="match status" value="1"/>
</dbReference>
<dbReference type="PROSITE" id="PS00061">
    <property type="entry name" value="ADH_SHORT"/>
    <property type="match status" value="1"/>
</dbReference>
<accession>P50167</accession>
<accession>A3LUR3</accession>
<feature type="chain" id="PRO_0000054519" description="D-arabinitol 2-dehydrogenase [ribulose-forming]">
    <location>
        <begin position="1"/>
        <end position="278"/>
    </location>
</feature>
<feature type="active site" description="Proton donor" evidence="2">
    <location>
        <position position="166"/>
    </location>
</feature>
<feature type="active site" description="Proton acceptor" evidence="3">
    <location>
        <position position="181"/>
    </location>
</feature>
<feature type="active site" description="Lowers pKa of active site Tyr" evidence="2">
    <location>
        <position position="185"/>
    </location>
</feature>
<feature type="binding site" evidence="1">
    <location>
        <position position="28"/>
    </location>
    <ligand>
        <name>NADP(+)</name>
        <dbReference type="ChEBI" id="CHEBI:58349"/>
    </ligand>
</feature>
<feature type="binding site" evidence="1">
    <location>
        <position position="49"/>
    </location>
    <ligand>
        <name>NADP(+)</name>
        <dbReference type="ChEBI" id="CHEBI:58349"/>
    </ligand>
</feature>
<feature type="binding site" evidence="2">
    <location>
        <position position="181"/>
    </location>
    <ligand>
        <name>NADP(+)</name>
        <dbReference type="ChEBI" id="CHEBI:58349"/>
    </ligand>
</feature>
<feature type="binding site" evidence="2">
    <location>
        <position position="185"/>
    </location>
    <ligand>
        <name>NADP(+)</name>
        <dbReference type="ChEBI" id="CHEBI:58349"/>
    </ligand>
</feature>
<feature type="binding site" evidence="2">
    <location>
        <position position="214"/>
    </location>
    <ligand>
        <name>NADP(+)</name>
        <dbReference type="ChEBI" id="CHEBI:58349"/>
    </ligand>
</feature>
<feature type="binding site" evidence="1">
    <location>
        <position position="216"/>
    </location>
    <ligand>
        <name>NADP(+)</name>
        <dbReference type="ChEBI" id="CHEBI:58349"/>
    </ligand>
</feature>
<comment type="catalytic activity">
    <reaction>
        <text>D-arabinitol + NAD(+) = D-ribulose + NADH + H(+)</text>
        <dbReference type="Rhea" id="RHEA:17389"/>
        <dbReference type="ChEBI" id="CHEBI:15378"/>
        <dbReference type="ChEBI" id="CHEBI:17173"/>
        <dbReference type="ChEBI" id="CHEBI:18333"/>
        <dbReference type="ChEBI" id="CHEBI:57540"/>
        <dbReference type="ChEBI" id="CHEBI:57945"/>
        <dbReference type="EC" id="1.1.1.250"/>
    </reaction>
</comment>
<comment type="pathway">
    <text>Carbohydrate metabolism; D-arabinitol metabolism.</text>
</comment>
<comment type="similarity">
    <text evidence="4">Belongs to the short-chain dehydrogenases/reductases (SDR) family.</text>
</comment>
<reference key="1">
    <citation type="journal article" date="1995" name="Yeast">
        <title>A short-chain dehydrogenase gene from Pichia stipitis having D-arabinitol dehydrogenase activity.</title>
        <authorList>
            <person name="Hallborn J."/>
            <person name="Walfridsson M."/>
            <person name="Penttilae M."/>
            <person name="Keraenen S."/>
            <person name="Hahn-Haegerdal B."/>
        </authorList>
    </citation>
    <scope>NUCLEOTIDE SEQUENCE [MRNA]</scope>
    <source>
        <strain>ATCC 58785 / CBS 6054 / NBRC 10063 / NRRL Y-11545</strain>
    </source>
</reference>
<reference key="2">
    <citation type="journal article" date="2007" name="Nat. Biotechnol.">
        <title>Genome sequence of the lignocellulose-bioconverting and xylose-fermenting yeast Pichia stipitis.</title>
        <authorList>
            <person name="Jeffries T.W."/>
            <person name="Grigoriev I.V."/>
            <person name="Grimwood J."/>
            <person name="Laplaza J.M."/>
            <person name="Aerts A."/>
            <person name="Salamov A."/>
            <person name="Schmutz J."/>
            <person name="Lindquist E."/>
            <person name="Dehal P."/>
            <person name="Shapiro H."/>
            <person name="Jin Y.-S."/>
            <person name="Passoth V."/>
            <person name="Richardson P.M."/>
        </authorList>
    </citation>
    <scope>NUCLEOTIDE SEQUENCE [LARGE SCALE GENOMIC DNA]</scope>
    <source>
        <strain>ATCC 58785 / CBS 6054 / NBRC 10063 / NRRL Y-11545</strain>
    </source>
</reference>
<protein>
    <recommendedName>
        <fullName>D-arabinitol 2-dehydrogenase [ribulose-forming]</fullName>
        <shortName>ARDH</shortName>
        <ecNumber>1.1.1.250</ecNumber>
    </recommendedName>
</protein>